<name>R1442_DANRE</name>
<sequence>MSSSRYEPSWDVDLAPLLSCKLCLGEFPLEQMTTISQCQCIFCSLCLKQYVELLIKEGLETAISCPDSACPKQGHLLENEIECMVAGEVMQHYKRLQFEREVLLDPCRTWCPSSSCQAVCQLNEAEVQLPQPVQCPECSLRFCSACRADCHTGQACQEMLPITTFLPGENGSNLKSQEDEAPIKRCPKCKVYIERDEGCAQMMCKNCKHAFCWYCLESLDDDFLLIHYDKGPCRNKLGHSRASVIWHRTQVVGIFAGFGLLLLVASPFLLLATPFVLCCKCKCKRGDDDPLPT</sequence>
<keyword id="KW-0472">Membrane</keyword>
<keyword id="KW-0479">Metal-binding</keyword>
<keyword id="KW-1185">Reference proteome</keyword>
<keyword id="KW-0677">Repeat</keyword>
<keyword id="KW-0808">Transferase</keyword>
<keyword id="KW-0812">Transmembrane</keyword>
<keyword id="KW-1133">Transmembrane helix</keyword>
<keyword id="KW-0833">Ubl conjugation pathway</keyword>
<keyword id="KW-0862">Zinc</keyword>
<keyword id="KW-0863">Zinc-finger</keyword>
<reference key="1">
    <citation type="journal article" date="2013" name="Nature">
        <title>The zebrafish reference genome sequence and its relationship to the human genome.</title>
        <authorList>
            <person name="Howe K."/>
            <person name="Clark M.D."/>
            <person name="Torroja C.F."/>
            <person name="Torrance J."/>
            <person name="Berthelot C."/>
            <person name="Muffato M."/>
            <person name="Collins J.E."/>
            <person name="Humphray S."/>
            <person name="McLaren K."/>
            <person name="Matthews L."/>
            <person name="McLaren S."/>
            <person name="Sealy I."/>
            <person name="Caccamo M."/>
            <person name="Churcher C."/>
            <person name="Scott C."/>
            <person name="Barrett J.C."/>
            <person name="Koch R."/>
            <person name="Rauch G.J."/>
            <person name="White S."/>
            <person name="Chow W."/>
            <person name="Kilian B."/>
            <person name="Quintais L.T."/>
            <person name="Guerra-Assuncao J.A."/>
            <person name="Zhou Y."/>
            <person name="Gu Y."/>
            <person name="Yen J."/>
            <person name="Vogel J.H."/>
            <person name="Eyre T."/>
            <person name="Redmond S."/>
            <person name="Banerjee R."/>
            <person name="Chi J."/>
            <person name="Fu B."/>
            <person name="Langley E."/>
            <person name="Maguire S.F."/>
            <person name="Laird G.K."/>
            <person name="Lloyd D."/>
            <person name="Kenyon E."/>
            <person name="Donaldson S."/>
            <person name="Sehra H."/>
            <person name="Almeida-King J."/>
            <person name="Loveland J."/>
            <person name="Trevanion S."/>
            <person name="Jones M."/>
            <person name="Quail M."/>
            <person name="Willey D."/>
            <person name="Hunt A."/>
            <person name="Burton J."/>
            <person name="Sims S."/>
            <person name="McLay K."/>
            <person name="Plumb B."/>
            <person name="Davis J."/>
            <person name="Clee C."/>
            <person name="Oliver K."/>
            <person name="Clark R."/>
            <person name="Riddle C."/>
            <person name="Elliot D."/>
            <person name="Threadgold G."/>
            <person name="Harden G."/>
            <person name="Ware D."/>
            <person name="Begum S."/>
            <person name="Mortimore B."/>
            <person name="Kerry G."/>
            <person name="Heath P."/>
            <person name="Phillimore B."/>
            <person name="Tracey A."/>
            <person name="Corby N."/>
            <person name="Dunn M."/>
            <person name="Johnson C."/>
            <person name="Wood J."/>
            <person name="Clark S."/>
            <person name="Pelan S."/>
            <person name="Griffiths G."/>
            <person name="Smith M."/>
            <person name="Glithero R."/>
            <person name="Howden P."/>
            <person name="Barker N."/>
            <person name="Lloyd C."/>
            <person name="Stevens C."/>
            <person name="Harley J."/>
            <person name="Holt K."/>
            <person name="Panagiotidis G."/>
            <person name="Lovell J."/>
            <person name="Beasley H."/>
            <person name="Henderson C."/>
            <person name="Gordon D."/>
            <person name="Auger K."/>
            <person name="Wright D."/>
            <person name="Collins J."/>
            <person name="Raisen C."/>
            <person name="Dyer L."/>
            <person name="Leung K."/>
            <person name="Robertson L."/>
            <person name="Ambridge K."/>
            <person name="Leongamornlert D."/>
            <person name="McGuire S."/>
            <person name="Gilderthorp R."/>
            <person name="Griffiths C."/>
            <person name="Manthravadi D."/>
            <person name="Nichol S."/>
            <person name="Barker G."/>
            <person name="Whitehead S."/>
            <person name="Kay M."/>
            <person name="Brown J."/>
            <person name="Murnane C."/>
            <person name="Gray E."/>
            <person name="Humphries M."/>
            <person name="Sycamore N."/>
            <person name="Barker D."/>
            <person name="Saunders D."/>
            <person name="Wallis J."/>
            <person name="Babbage A."/>
            <person name="Hammond S."/>
            <person name="Mashreghi-Mohammadi M."/>
            <person name="Barr L."/>
            <person name="Martin S."/>
            <person name="Wray P."/>
            <person name="Ellington A."/>
            <person name="Matthews N."/>
            <person name="Ellwood M."/>
            <person name="Woodmansey R."/>
            <person name="Clark G."/>
            <person name="Cooper J."/>
            <person name="Tromans A."/>
            <person name="Grafham D."/>
            <person name="Skuce C."/>
            <person name="Pandian R."/>
            <person name="Andrews R."/>
            <person name="Harrison E."/>
            <person name="Kimberley A."/>
            <person name="Garnett J."/>
            <person name="Fosker N."/>
            <person name="Hall R."/>
            <person name="Garner P."/>
            <person name="Kelly D."/>
            <person name="Bird C."/>
            <person name="Palmer S."/>
            <person name="Gehring I."/>
            <person name="Berger A."/>
            <person name="Dooley C.M."/>
            <person name="Ersan-Urun Z."/>
            <person name="Eser C."/>
            <person name="Geiger H."/>
            <person name="Geisler M."/>
            <person name="Karotki L."/>
            <person name="Kirn A."/>
            <person name="Konantz J."/>
            <person name="Konantz M."/>
            <person name="Oberlander M."/>
            <person name="Rudolph-Geiger S."/>
            <person name="Teucke M."/>
            <person name="Lanz C."/>
            <person name="Raddatz G."/>
            <person name="Osoegawa K."/>
            <person name="Zhu B."/>
            <person name="Rapp A."/>
            <person name="Widaa S."/>
            <person name="Langford C."/>
            <person name="Yang F."/>
            <person name="Schuster S.C."/>
            <person name="Carter N.P."/>
            <person name="Harrow J."/>
            <person name="Ning Z."/>
            <person name="Herrero J."/>
            <person name="Searle S.M."/>
            <person name="Enright A."/>
            <person name="Geisler R."/>
            <person name="Plasterk R.H."/>
            <person name="Lee C."/>
            <person name="Westerfield M."/>
            <person name="de Jong P.J."/>
            <person name="Zon L.I."/>
            <person name="Postlethwait J.H."/>
            <person name="Nusslein-Volhard C."/>
            <person name="Hubbard T.J."/>
            <person name="Roest Crollius H."/>
            <person name="Rogers J."/>
            <person name="Stemple D.L."/>
        </authorList>
    </citation>
    <scope>NUCLEOTIDE SEQUENCE [LARGE SCALE GENOMIC DNA]</scope>
    <source>
        <strain>Tuebingen</strain>
    </source>
</reference>
<reference key="2">
    <citation type="submission" date="2004-07" db="EMBL/GenBank/DDBJ databases">
        <authorList>
            <consortium name="NIH - Zebrafish Gene Collection (ZGC) project"/>
        </authorList>
    </citation>
    <scope>NUCLEOTIDE SEQUENCE [LARGE SCALE MRNA]</scope>
    <source>
        <strain>SJD</strain>
    </source>
</reference>
<protein>
    <recommendedName>
        <fullName>Probable E3 ubiquitin-protein ligase RNF144A-B</fullName>
        <ecNumber evidence="2">2.3.2.31</ecNumber>
    </recommendedName>
    <alternativeName>
        <fullName>RING finger protein 144A-B</fullName>
    </alternativeName>
</protein>
<feature type="chain" id="PRO_0000307192" description="Probable E3 ubiquitin-protein ligase RNF144A-B">
    <location>
        <begin position="1"/>
        <end position="293"/>
    </location>
</feature>
<feature type="transmembrane region" description="Helical" evidence="3">
    <location>
        <begin position="251"/>
        <end position="271"/>
    </location>
</feature>
<feature type="zinc finger region" description="RING-type 1" evidence="4">
    <location>
        <begin position="20"/>
        <end position="70"/>
    </location>
</feature>
<feature type="zinc finger region" description="IBR-type" evidence="4">
    <location>
        <begin position="91"/>
        <end position="156"/>
    </location>
</feature>
<feature type="zinc finger region" description="RING-type 2; atypical" evidence="4">
    <location>
        <begin position="186"/>
        <end position="215"/>
    </location>
</feature>
<feature type="region of interest" description="TRIAD supradomain" evidence="4">
    <location>
        <begin position="16"/>
        <end position="237"/>
    </location>
</feature>
<feature type="active site" evidence="4">
    <location>
        <position position="199"/>
    </location>
</feature>
<feature type="binding site" evidence="4">
    <location>
        <position position="20"/>
    </location>
    <ligand>
        <name>Zn(2+)</name>
        <dbReference type="ChEBI" id="CHEBI:29105"/>
        <label>1</label>
    </ligand>
</feature>
<feature type="binding site" evidence="4">
    <location>
        <position position="23"/>
    </location>
    <ligand>
        <name>Zn(2+)</name>
        <dbReference type="ChEBI" id="CHEBI:29105"/>
        <label>1</label>
    </ligand>
</feature>
<feature type="binding site" evidence="4">
    <location>
        <position position="43"/>
    </location>
    <ligand>
        <name>Zn(2+)</name>
        <dbReference type="ChEBI" id="CHEBI:29105"/>
        <label>1</label>
    </ligand>
</feature>
<feature type="binding site" evidence="4">
    <location>
        <position position="46"/>
    </location>
    <ligand>
        <name>Zn(2+)</name>
        <dbReference type="ChEBI" id="CHEBI:29105"/>
        <label>1</label>
    </ligand>
</feature>
<feature type="binding site" evidence="4">
    <location>
        <position position="111"/>
    </location>
    <ligand>
        <name>Zn(2+)</name>
        <dbReference type="ChEBI" id="CHEBI:29105"/>
        <label>2</label>
    </ligand>
</feature>
<feature type="binding site" evidence="4">
    <location>
        <position position="116"/>
    </location>
    <ligand>
        <name>Zn(2+)</name>
        <dbReference type="ChEBI" id="CHEBI:29105"/>
        <label>2</label>
    </ligand>
</feature>
<feature type="binding site" evidence="4">
    <location>
        <position position="135"/>
    </location>
    <ligand>
        <name>Zn(2+)</name>
        <dbReference type="ChEBI" id="CHEBI:29105"/>
        <label>2</label>
    </ligand>
</feature>
<feature type="binding site" evidence="4">
    <location>
        <position position="138"/>
    </location>
    <ligand>
        <name>Zn(2+)</name>
        <dbReference type="ChEBI" id="CHEBI:29105"/>
        <label>2</label>
    </ligand>
</feature>
<feature type="binding site" evidence="4">
    <location>
        <position position="143"/>
    </location>
    <ligand>
        <name>Zn(2+)</name>
        <dbReference type="ChEBI" id="CHEBI:29105"/>
        <label>3</label>
    </ligand>
</feature>
<feature type="binding site" evidence="4">
    <location>
        <position position="146"/>
    </location>
    <ligand>
        <name>Zn(2+)</name>
        <dbReference type="ChEBI" id="CHEBI:29105"/>
        <label>3</label>
    </ligand>
</feature>
<feature type="binding site" evidence="4">
    <location>
        <position position="151"/>
    </location>
    <ligand>
        <name>Zn(2+)</name>
        <dbReference type="ChEBI" id="CHEBI:29105"/>
        <label>3</label>
    </ligand>
</feature>
<feature type="binding site" evidence="4">
    <location>
        <position position="156"/>
    </location>
    <ligand>
        <name>Zn(2+)</name>
        <dbReference type="ChEBI" id="CHEBI:29105"/>
        <label>3</label>
    </ligand>
</feature>
<feature type="binding site" evidence="4">
    <location>
        <position position="186"/>
    </location>
    <ligand>
        <name>Zn(2+)</name>
        <dbReference type="ChEBI" id="CHEBI:29105"/>
        <label>4</label>
    </ligand>
</feature>
<feature type="binding site" evidence="4">
    <location>
        <position position="189"/>
    </location>
    <ligand>
        <name>Zn(2+)</name>
        <dbReference type="ChEBI" id="CHEBI:29105"/>
        <label>4</label>
    </ligand>
</feature>
<feature type="binding site" evidence="4">
    <location>
        <position position="204"/>
    </location>
    <ligand>
        <name>Zn(2+)</name>
        <dbReference type="ChEBI" id="CHEBI:29105"/>
        <label>4</label>
    </ligand>
</feature>
<feature type="binding site" evidence="4">
    <location>
        <position position="207"/>
    </location>
    <ligand>
        <name>Zn(2+)</name>
        <dbReference type="ChEBI" id="CHEBI:29105"/>
        <label>4</label>
    </ligand>
</feature>
<feature type="binding site" evidence="4">
    <location>
        <position position="212"/>
    </location>
    <ligand>
        <name>Zn(2+)</name>
        <dbReference type="ChEBI" id="CHEBI:29105"/>
        <label>5</label>
    </ligand>
</feature>
<feature type="binding site" evidence="4">
    <location>
        <position position="215"/>
    </location>
    <ligand>
        <name>Zn(2+)</name>
        <dbReference type="ChEBI" id="CHEBI:29105"/>
        <label>5</label>
    </ligand>
</feature>
<feature type="binding site" evidence="4">
    <location>
        <position position="227"/>
    </location>
    <ligand>
        <name>Zn(2+)</name>
        <dbReference type="ChEBI" id="CHEBI:29105"/>
        <label>5</label>
    </ligand>
</feature>
<feature type="binding site" evidence="4">
    <location>
        <position position="233"/>
    </location>
    <ligand>
        <name>Zn(2+)</name>
        <dbReference type="ChEBI" id="CHEBI:29105"/>
        <label>5</label>
    </ligand>
</feature>
<feature type="sequence conflict" description="In Ref. 1; CAH69141." evidence="5" ref="1">
    <original>A</original>
    <variation>T</variation>
    <location>
        <position position="69"/>
    </location>
</feature>
<feature type="sequence conflict" description="In Ref. 1; CAH69141." evidence="5" ref="1">
    <original>G</original>
    <variation>GS</variation>
    <location>
        <position position="171"/>
    </location>
</feature>
<comment type="function">
    <text evidence="1">E3 ubiquitin-protein ligase which accepts ubiquitin from E2 ubiquitin-conjugating enzymes ube2l3 and ube2l6 in the form of a thioester and then directly transfers the ubiquitin to targeted substrates.</text>
</comment>
<comment type="catalytic activity">
    <reaction evidence="2">
        <text>[E2 ubiquitin-conjugating enzyme]-S-ubiquitinyl-L-cysteine + [acceptor protein]-L-lysine = [E2 ubiquitin-conjugating enzyme]-L-cysteine + [acceptor protein]-N(6)-ubiquitinyl-L-lysine.</text>
        <dbReference type="EC" id="2.3.2.31"/>
    </reaction>
</comment>
<comment type="pathway">
    <text>Protein modification; protein ubiquitination.</text>
</comment>
<comment type="subcellular location">
    <subcellularLocation>
        <location evidence="5">Membrane</location>
        <topology evidence="5">Single-pass membrane protein</topology>
    </subcellularLocation>
</comment>
<comment type="domain">
    <text evidence="2">Members of the RBR family are atypical E3 ligases. They interact with the E2 conjugating enzyme UBE2L3 and function like HECT-type E3 enzymes: they bind E2s via the first RING domain, but require an obligate trans-thiolation step during the ubiquitin transfer, requiring a conserved cysteine residue in the second RING domain.</text>
</comment>
<comment type="similarity">
    <text evidence="5">Belongs to the RBR family. RNF144 subfamily.</text>
</comment>
<comment type="caution">
    <text evidence="5">Lacks the His residue in the RING-type domain 2 that is one of the conserved features of the family.</text>
</comment>
<accession>Q6DH94</accession>
<accession>Q5TZ96</accession>
<gene>
    <name type="primary">rnf144ab</name>
    <name type="synonym">rnf144</name>
    <name type="synonym">rnf144a</name>
    <name type="ORF">si:dkeyp-7f8.1</name>
    <name type="ORF">zgc:92582</name>
</gene>
<evidence type="ECO:0000250" key="1"/>
<evidence type="ECO:0000250" key="2">
    <source>
        <dbReference type="UniProtKB" id="O60260"/>
    </source>
</evidence>
<evidence type="ECO:0000255" key="3"/>
<evidence type="ECO:0000255" key="4">
    <source>
        <dbReference type="PROSITE-ProRule" id="PRU01221"/>
    </source>
</evidence>
<evidence type="ECO:0000305" key="5"/>
<organism>
    <name type="scientific">Danio rerio</name>
    <name type="common">Zebrafish</name>
    <name type="synonym">Brachydanio rerio</name>
    <dbReference type="NCBI Taxonomy" id="7955"/>
    <lineage>
        <taxon>Eukaryota</taxon>
        <taxon>Metazoa</taxon>
        <taxon>Chordata</taxon>
        <taxon>Craniata</taxon>
        <taxon>Vertebrata</taxon>
        <taxon>Euteleostomi</taxon>
        <taxon>Actinopterygii</taxon>
        <taxon>Neopterygii</taxon>
        <taxon>Teleostei</taxon>
        <taxon>Ostariophysi</taxon>
        <taxon>Cypriniformes</taxon>
        <taxon>Danionidae</taxon>
        <taxon>Danioninae</taxon>
        <taxon>Danio</taxon>
    </lineage>
</organism>
<dbReference type="EC" id="2.3.2.31" evidence="2"/>
<dbReference type="EMBL" id="BX293564">
    <property type="protein sequence ID" value="CAH69141.1"/>
    <property type="molecule type" value="Genomic_DNA"/>
</dbReference>
<dbReference type="EMBL" id="BC076084">
    <property type="protein sequence ID" value="AAH76084.1"/>
    <property type="molecule type" value="mRNA"/>
</dbReference>
<dbReference type="RefSeq" id="NP_001002727.1">
    <property type="nucleotide sequence ID" value="NM_001002727.1"/>
</dbReference>
<dbReference type="SMR" id="Q6DH94"/>
<dbReference type="FunCoup" id="Q6DH94">
    <property type="interactions" value="2"/>
</dbReference>
<dbReference type="STRING" id="7955.ENSDARP00000112931"/>
<dbReference type="PaxDb" id="7955-ENSDARP00000112931"/>
<dbReference type="GeneID" id="437000"/>
<dbReference type="KEGG" id="dre:437000"/>
<dbReference type="AGR" id="ZFIN:ZDB-GENE-040718-486"/>
<dbReference type="CTD" id="437000"/>
<dbReference type="ZFIN" id="ZDB-GENE-040718-486">
    <property type="gene designation" value="rnf144ab"/>
</dbReference>
<dbReference type="eggNOG" id="KOG1815">
    <property type="taxonomic scope" value="Eukaryota"/>
</dbReference>
<dbReference type="InParanoid" id="Q6DH94"/>
<dbReference type="OrthoDB" id="10009520at2759"/>
<dbReference type="PhylomeDB" id="Q6DH94"/>
<dbReference type="TreeFam" id="TF324777"/>
<dbReference type="UniPathway" id="UPA00143"/>
<dbReference type="PRO" id="PR:Q6DH94"/>
<dbReference type="Proteomes" id="UP000000437">
    <property type="component" value="Chromosome 20"/>
</dbReference>
<dbReference type="GO" id="GO:0005737">
    <property type="term" value="C:cytoplasm"/>
    <property type="evidence" value="ECO:0000318"/>
    <property type="project" value="GO_Central"/>
</dbReference>
<dbReference type="GO" id="GO:0005794">
    <property type="term" value="C:Golgi apparatus"/>
    <property type="evidence" value="ECO:0000318"/>
    <property type="project" value="GO_Central"/>
</dbReference>
<dbReference type="GO" id="GO:0016020">
    <property type="term" value="C:membrane"/>
    <property type="evidence" value="ECO:0007669"/>
    <property type="project" value="UniProtKB-SubCell"/>
</dbReference>
<dbReference type="GO" id="GO:0000151">
    <property type="term" value="C:ubiquitin ligase complex"/>
    <property type="evidence" value="ECO:0000318"/>
    <property type="project" value="GO_Central"/>
</dbReference>
<dbReference type="GO" id="GO:0031624">
    <property type="term" value="F:ubiquitin conjugating enzyme binding"/>
    <property type="evidence" value="ECO:0000318"/>
    <property type="project" value="GO_Central"/>
</dbReference>
<dbReference type="GO" id="GO:0061630">
    <property type="term" value="F:ubiquitin protein ligase activity"/>
    <property type="evidence" value="ECO:0000318"/>
    <property type="project" value="GO_Central"/>
</dbReference>
<dbReference type="GO" id="GO:0008270">
    <property type="term" value="F:zinc ion binding"/>
    <property type="evidence" value="ECO:0007669"/>
    <property type="project" value="UniProtKB-KW"/>
</dbReference>
<dbReference type="GO" id="GO:0016567">
    <property type="term" value="P:protein ubiquitination"/>
    <property type="evidence" value="ECO:0007669"/>
    <property type="project" value="UniProtKB-UniPathway"/>
</dbReference>
<dbReference type="GO" id="GO:0006511">
    <property type="term" value="P:ubiquitin-dependent protein catabolic process"/>
    <property type="evidence" value="ECO:0000318"/>
    <property type="project" value="GO_Central"/>
</dbReference>
<dbReference type="CDD" id="cd20366">
    <property type="entry name" value="BRcat_RBR_RNF144A"/>
    <property type="match status" value="1"/>
</dbReference>
<dbReference type="CDD" id="cd16777">
    <property type="entry name" value="mRING-HC-C4C4_RBR_RNF144A"/>
    <property type="match status" value="1"/>
</dbReference>
<dbReference type="CDD" id="cd20352">
    <property type="entry name" value="Rcat_RBR_RNF144"/>
    <property type="match status" value="1"/>
</dbReference>
<dbReference type="FunFam" id="1.20.120.1750:FF:000006">
    <property type="entry name" value="RBR-type E3 ubiquitin transferase"/>
    <property type="match status" value="1"/>
</dbReference>
<dbReference type="FunFam" id="3.30.40.10:FF:000051">
    <property type="entry name" value="RBR-type E3 ubiquitin transferase"/>
    <property type="match status" value="1"/>
</dbReference>
<dbReference type="Gene3D" id="1.20.120.1750">
    <property type="match status" value="1"/>
</dbReference>
<dbReference type="Gene3D" id="3.30.40.10">
    <property type="entry name" value="Zinc/RING finger domain, C3HC4 (zinc finger)"/>
    <property type="match status" value="1"/>
</dbReference>
<dbReference type="InterPro" id="IPR031127">
    <property type="entry name" value="E3_UB_ligase_RBR"/>
</dbReference>
<dbReference type="InterPro" id="IPR002867">
    <property type="entry name" value="IBR_dom"/>
</dbReference>
<dbReference type="InterPro" id="IPR044066">
    <property type="entry name" value="TRIAD_supradom"/>
</dbReference>
<dbReference type="InterPro" id="IPR001841">
    <property type="entry name" value="Znf_RING"/>
</dbReference>
<dbReference type="InterPro" id="IPR013083">
    <property type="entry name" value="Znf_RING/FYVE/PHD"/>
</dbReference>
<dbReference type="InterPro" id="IPR017907">
    <property type="entry name" value="Znf_RING_CS"/>
</dbReference>
<dbReference type="PANTHER" id="PTHR11685">
    <property type="entry name" value="RBR FAMILY RING FINGER AND IBR DOMAIN-CONTAINING"/>
    <property type="match status" value="1"/>
</dbReference>
<dbReference type="Pfam" id="PF01485">
    <property type="entry name" value="IBR"/>
    <property type="match status" value="1"/>
</dbReference>
<dbReference type="Pfam" id="PF22191">
    <property type="entry name" value="IBR_1"/>
    <property type="match status" value="1"/>
</dbReference>
<dbReference type="SMART" id="SM00647">
    <property type="entry name" value="IBR"/>
    <property type="match status" value="2"/>
</dbReference>
<dbReference type="SUPFAM" id="SSF57850">
    <property type="entry name" value="RING/U-box"/>
    <property type="match status" value="3"/>
</dbReference>
<dbReference type="PROSITE" id="PS51873">
    <property type="entry name" value="TRIAD"/>
    <property type="match status" value="1"/>
</dbReference>
<dbReference type="PROSITE" id="PS00518">
    <property type="entry name" value="ZF_RING_1"/>
    <property type="match status" value="1"/>
</dbReference>
<dbReference type="PROSITE" id="PS50089">
    <property type="entry name" value="ZF_RING_2"/>
    <property type="match status" value="1"/>
</dbReference>
<proteinExistence type="evidence at transcript level"/>